<sequence>MDQFIKQDETGDLIETGMNVANHFLSAPIQGTNSLSKASIIPGVAPVLIGNPEQKNIQHPTASHQGSKSKGRGSGVRSIIVPPSEAGNGGTQIPEPLFAQTGQGGIVTTVYQDPTIQPTGSYRSVELTKIGKERMINRFVEKPRISTPVTEFKRGGPGAAAQGQTIQEEGIDGNGASAGSKERSGSLSGATLYAHLSLPQQDSTPANVGIAPQSAISANEIMDLLRGMDARLQHLEQKVDKVLAQGSMVTQIKNELSTVKTTLATIEGMMATVKIMDPGNPTGVPVDELRRSFSDHVTIVSGPGDVSFSSSEEPTLYLDELARPVSKPRPAKQTKPQPVKDLAGRKVMITKMITDCVANPQMKQAFEQRLAKASTEDALNDIKRDIIRSAI</sequence>
<keyword id="KW-0175">Coiled coil</keyword>
<keyword id="KW-0597">Phosphoprotein</keyword>
<keyword id="KW-0691">RNA editing</keyword>
<keyword id="KW-0693">Viral RNA replication</keyword>
<name>PHOSP_MUMPE</name>
<evidence type="ECO:0000250" key="1">
    <source>
        <dbReference type="UniProtKB" id="C0JJ97"/>
    </source>
</evidence>
<evidence type="ECO:0000250" key="2">
    <source>
        <dbReference type="UniProtKB" id="F8V2V0"/>
    </source>
</evidence>
<evidence type="ECO:0000250" key="3">
    <source>
        <dbReference type="UniProtKB" id="P06162"/>
    </source>
</evidence>
<evidence type="ECO:0000250" key="4">
    <source>
        <dbReference type="UniProtKB" id="Q77M42"/>
    </source>
</evidence>
<evidence type="ECO:0000250" key="5">
    <source>
        <dbReference type="UniProtKB" id="Q9WMB4"/>
    </source>
</evidence>
<evidence type="ECO:0000255" key="6"/>
<evidence type="ECO:0000256" key="7">
    <source>
        <dbReference type="SAM" id="MobiDB-lite"/>
    </source>
</evidence>
<evidence type="ECO:0000269" key="8">
    <source>
    </source>
</evidence>
<evidence type="ECO:0000269" key="9">
    <source>
    </source>
</evidence>
<evidence type="ECO:0000269" key="10">
    <source>
    </source>
</evidence>
<evidence type="ECO:0000305" key="11"/>
<proteinExistence type="evidence at protein level"/>
<organism>
    <name type="scientific">Mumps virus (strain Enders)</name>
    <name type="common">MuV</name>
    <dbReference type="NCBI Taxonomy" id="11167"/>
    <lineage>
        <taxon>Viruses</taxon>
        <taxon>Riboviria</taxon>
        <taxon>Orthornavirae</taxon>
        <taxon>Negarnaviricota</taxon>
        <taxon>Haploviricotina</taxon>
        <taxon>Monjiviricetes</taxon>
        <taxon>Mononegavirales</taxon>
        <taxon>Paramyxoviridae</taxon>
        <taxon>Rubulavirinae</taxon>
        <taxon>Orthorubulavirus</taxon>
        <taxon>Orthorubulavirus parotitidis</taxon>
        <taxon>Mumps orthorubulavirus</taxon>
    </lineage>
</organism>
<dbReference type="EMBL" id="D00351">
    <property type="protein sequence ID" value="BAA00259.1"/>
    <property type="molecule type" value="Genomic_RNA"/>
</dbReference>
<dbReference type="PIR" id="JU0067">
    <property type="entry name" value="RRNZED"/>
</dbReference>
<dbReference type="SMR" id="P16072"/>
<dbReference type="CDD" id="cd21031">
    <property type="entry name" value="MEV_P-protein-C_like"/>
    <property type="match status" value="1"/>
</dbReference>
<dbReference type="Gene3D" id="1.20.5.300">
    <property type="match status" value="1"/>
</dbReference>
<dbReference type="Gene3D" id="1.10.8.10">
    <property type="entry name" value="DNA helicase RuvA subunit, C-terminal domain"/>
    <property type="match status" value="1"/>
</dbReference>
<dbReference type="InterPro" id="IPR004897">
    <property type="entry name" value="P/V_Pprotein_paramyxoviral"/>
</dbReference>
<dbReference type="Pfam" id="PF03210">
    <property type="entry name" value="Paramyx_P_V_C"/>
    <property type="match status" value="1"/>
</dbReference>
<gene>
    <name evidence="11" type="primary">P/V/I</name>
</gene>
<feature type="chain" id="PRO_0000142693" description="Phosphoprotein">
    <location>
        <begin position="1"/>
        <end position="391"/>
    </location>
</feature>
<feature type="region of interest" description="Disordered" evidence="7">
    <location>
        <begin position="54"/>
        <end position="98"/>
    </location>
</feature>
<feature type="region of interest" description="Disordered" evidence="7">
    <location>
        <begin position="148"/>
        <end position="184"/>
    </location>
</feature>
<feature type="region of interest" description="Multimerization" evidence="4">
    <location>
        <begin position="216"/>
        <end position="279"/>
    </location>
</feature>
<feature type="region of interest" description="Interaction with the nucleoprotein" evidence="1">
    <location>
        <begin position="343"/>
        <end position="391"/>
    </location>
</feature>
<feature type="coiled-coil region" evidence="6">
    <location>
        <begin position="218"/>
        <end position="245"/>
    </location>
</feature>
<feature type="compositionally biased region" description="Polar residues" evidence="7">
    <location>
        <begin position="54"/>
        <end position="65"/>
    </location>
</feature>
<feature type="modified residue" description="Phosphothreonine" evidence="2">
    <location>
        <position position="10"/>
    </location>
</feature>
<feature type="modified residue" description="Phosphothreonine" evidence="2">
    <location>
        <position position="16"/>
    </location>
</feature>
<feature type="modified residue" description="Phosphoserine" evidence="2">
    <location>
        <position position="69"/>
    </location>
</feature>
<feature type="modified residue" description="Phosphothreonine" evidence="2">
    <location>
        <position position="91"/>
    </location>
</feature>
<feature type="modified residue" description="Phosphothreonine" evidence="2">
    <location>
        <position position="150"/>
    </location>
</feature>
<feature type="modified residue" description="Phosphothreonine" evidence="2">
    <location>
        <position position="165"/>
    </location>
</feature>
<feature type="modified residue" description="Phosphoserine" evidence="2">
    <location>
        <position position="188"/>
    </location>
</feature>
<feature type="modified residue" description="Phosphothreonine" evidence="2">
    <location>
        <position position="250"/>
    </location>
</feature>
<feature type="modified residue" description="Phosphoserine" evidence="2">
    <location>
        <position position="257"/>
    </location>
</feature>
<feature type="modified residue" description="Phosphothreonine" evidence="2">
    <location>
        <position position="258"/>
    </location>
</feature>
<feature type="modified residue" description="Phosphothreonine" evidence="2">
    <location>
        <position position="282"/>
    </location>
</feature>
<feature type="modified residue" description="Phosphoserine" evidence="10">
    <location>
        <position position="292"/>
    </location>
</feature>
<feature type="modified residue" description="Phosphoserine" evidence="10">
    <location>
        <position position="294"/>
    </location>
</feature>
<feature type="modified residue" description="Phosphothreonine" evidence="10">
    <location>
        <position position="298"/>
    </location>
</feature>
<feature type="modified residue" description="Phosphoserine" evidence="10">
    <location>
        <position position="301"/>
    </location>
</feature>
<feature type="modified residue" description="Phosphoserine" evidence="2">
    <location>
        <position position="374"/>
    </location>
</feature>
<feature type="modified residue" description="Phosphothreonine" evidence="2">
    <location>
        <position position="375"/>
    </location>
</feature>
<protein>
    <recommendedName>
        <fullName>Phosphoprotein</fullName>
        <shortName>Protein P</shortName>
    </recommendedName>
</protein>
<accession>P16072</accession>
<reference key="1">
    <citation type="journal article" date="1988" name="J. Gen. Virol.">
        <title>Molecular cloning and sequence analysis of the mumps virus gene encoding the P protein: mumps virus P gene is monocistronic.</title>
        <authorList>
            <person name="Takeuchi K."/>
            <person name="Hishiyama M."/>
            <person name="Yamada A."/>
            <person name="Sugiura A."/>
        </authorList>
    </citation>
    <scope>NUCLEOTIDE SEQUENCE [GENOMIC RNA]</scope>
</reference>
<reference key="2">
    <citation type="journal article" date="1990" name="Virology">
        <title>Detection and characterization of mumps virus V protein.</title>
        <authorList>
            <person name="Takeuchi K."/>
            <person name="Tanabayashi K."/>
            <person name="Hishiyama M."/>
            <person name="Yamada Y.K."/>
            <person name="Yamada A."/>
            <person name="Sugiura A."/>
        </authorList>
    </citation>
    <scope>RNA EDITING</scope>
</reference>
<reference key="3">
    <citation type="journal article" date="2020" name="J. Virol.">
        <title>Regulation of Mumps Virus Replication and Transcription by Kinase RPS6KB1.</title>
        <authorList>
            <person name="Briggs K."/>
            <person name="Wang L."/>
            <person name="Nagashima K."/>
            <person name="Zengel J."/>
            <person name="Tripp R.A."/>
            <person name="He B."/>
        </authorList>
    </citation>
    <scope>INTERACTION WITH HOST RPS6KB1</scope>
</reference>
<reference key="4">
    <citation type="journal article" date="2023" name="Cell">
        <title>Molecular mechanisms of stress-induced reactivation in mumps virus condensates.</title>
        <authorList>
            <person name="Zhang X."/>
            <person name="Sridharan S."/>
            <person name="Zagoriy I."/>
            <person name="Eugster Oegema C."/>
            <person name="Ching C."/>
            <person name="Pflaesterer T."/>
            <person name="Fung H.K.H."/>
            <person name="Becher I."/>
            <person name="Poser I."/>
            <person name="Muller C.W."/>
            <person name="Hyman A.A."/>
            <person name="Savitski M.M."/>
            <person name="Mahamid J."/>
        </authorList>
    </citation>
    <scope>PHOSPHORYLATION AT SER-292; SER-294; THR-298 AND SER-301</scope>
    <scope>FUNCTION</scope>
</reference>
<comment type="function">
    <text evidence="3 10">Essential cofactor of the RNA polymerase L that plays a central role in the transcription and replication by forming the polymerase complex with RNA polymerase L and recruiting L to the genomic N-RNA template for RNA synthesis (By similarity). Also plays a central role in the encapsidation of nascent RNA chains by forming the encapsidation complex with the nucleocapsid protein N (N-P complex). Acts as a chaperone for newly synthesized free N protein, so-called N0, allowing encapsidation of nascent RNA chains during replication (By similarity). The nucleoprotein protein N prevents excessive phosphorylation of P, which leads to down-regulation of viral transcription/ replication. Participates, together with N, in the formation of viral factories (viroplasms), which are large inclusions in the host cytoplasm where replication takes place (PubMed:37116470).</text>
</comment>
<comment type="subunit">
    <text evidence="1 4 9">Homotetramer (By similarity). Interacts (via multimerization domain) with polymerase L; this interaction forms the polymerase L-P complex (By similarity). Interacts (via N-terminus) with N0 (via Ncore); this interaction allows P to chaperon N0 to avoid N polymerization before encapsidation (By similarity). Interacts (via C-terminus) with N-RNA template; this interaction positions the polymerase on the template for both transcription and replication (By similarity). Interacts with host RPS6KB1 kinase; this interaction may play a role in the viral replication and transcription (PubMed:32295907).</text>
</comment>
<comment type="domain">
    <text evidence="1 5">The N-terminus consists of a long intrinsically disordered tail. The central part contains the coiled-coil multimerization domain (MD or OD) (By similarity). Forms a four-stranded coiled coil structure (By similarity). The C-terminus constitutes the alpha-helical X domain (XD) that binds to the nucleocapsid (N-RNA complex) and the L polymerase (By similarity).</text>
</comment>
<comment type="RNA editing">
    <location>
        <position position="155" evidence="8"/>
    </location>
    <text>Partially edited. RNA editing at this position consists of an insertion of 2 or 4 guanine nucleotides. The sequence displayed here is the P protein, derived from the edited RNA (+ 2 nucleotides). The unedited RNA gives rise to the V protein (AC P30927). The edited RNA (+ 4 nucleotide) gives rise to the I protein.</text>
</comment>
<comment type="similarity">
    <text evidence="11">Belongs to the rubulavirus/avulavirus P protein family.</text>
</comment>
<organismHost>
    <name type="scientific">Homo sapiens</name>
    <name type="common">Human</name>
    <dbReference type="NCBI Taxonomy" id="9606"/>
</organismHost>